<keyword id="KW-0378">Hydrolase</keyword>
<keyword id="KW-0479">Metal-binding</keyword>
<keyword id="KW-1185">Reference proteome</keyword>
<keyword id="KW-0862">Zinc</keyword>
<dbReference type="EC" id="3.1.3.-" evidence="1"/>
<dbReference type="EMBL" id="CP000568">
    <property type="protein sequence ID" value="ABN51352.1"/>
    <property type="molecule type" value="Genomic_DNA"/>
</dbReference>
<dbReference type="RefSeq" id="WP_003512119.1">
    <property type="nucleotide sequence ID" value="NC_009012.1"/>
</dbReference>
<dbReference type="SMR" id="A3DBM3"/>
<dbReference type="STRING" id="203119.Cthe_0111"/>
<dbReference type="GeneID" id="35803505"/>
<dbReference type="KEGG" id="cth:Cthe_0111"/>
<dbReference type="eggNOG" id="COG1387">
    <property type="taxonomic scope" value="Bacteria"/>
</dbReference>
<dbReference type="HOGENOM" id="CLU_061999_0_1_9"/>
<dbReference type="OrthoDB" id="9808747at2"/>
<dbReference type="Proteomes" id="UP000002145">
    <property type="component" value="Chromosome"/>
</dbReference>
<dbReference type="GO" id="GO:0005829">
    <property type="term" value="C:cytosol"/>
    <property type="evidence" value="ECO:0007669"/>
    <property type="project" value="TreeGrafter"/>
</dbReference>
<dbReference type="GO" id="GO:0016791">
    <property type="term" value="F:phosphatase activity"/>
    <property type="evidence" value="ECO:0007669"/>
    <property type="project" value="UniProtKB-UniRule"/>
</dbReference>
<dbReference type="GO" id="GO:0008270">
    <property type="term" value="F:zinc ion binding"/>
    <property type="evidence" value="ECO:0007669"/>
    <property type="project" value="UniProtKB-UniRule"/>
</dbReference>
<dbReference type="CDD" id="cd07437">
    <property type="entry name" value="PHP_HisPPase_Ycdx_like"/>
    <property type="match status" value="1"/>
</dbReference>
<dbReference type="Gene3D" id="3.20.20.140">
    <property type="entry name" value="Metal-dependent hydrolases"/>
    <property type="match status" value="1"/>
</dbReference>
<dbReference type="HAMAP" id="MF_01561">
    <property type="entry name" value="YcdX_phosphat"/>
    <property type="match status" value="1"/>
</dbReference>
<dbReference type="InterPro" id="IPR023710">
    <property type="entry name" value="Phosphatase_YcdX_put"/>
</dbReference>
<dbReference type="InterPro" id="IPR004013">
    <property type="entry name" value="PHP_dom"/>
</dbReference>
<dbReference type="InterPro" id="IPR050243">
    <property type="entry name" value="PHP_phosphatase"/>
</dbReference>
<dbReference type="InterPro" id="IPR003141">
    <property type="entry name" value="Pol/His_phosphatase_N"/>
</dbReference>
<dbReference type="InterPro" id="IPR016195">
    <property type="entry name" value="Pol/histidinol_Pase-like"/>
</dbReference>
<dbReference type="NCBIfam" id="NF006702">
    <property type="entry name" value="PRK09248.1"/>
    <property type="match status" value="1"/>
</dbReference>
<dbReference type="PANTHER" id="PTHR36928">
    <property type="entry name" value="PHOSPHATASE YCDX-RELATED"/>
    <property type="match status" value="1"/>
</dbReference>
<dbReference type="PANTHER" id="PTHR36928:SF1">
    <property type="entry name" value="PHOSPHATASE YCDX-RELATED"/>
    <property type="match status" value="1"/>
</dbReference>
<dbReference type="Pfam" id="PF02811">
    <property type="entry name" value="PHP"/>
    <property type="match status" value="1"/>
</dbReference>
<dbReference type="SMART" id="SM00481">
    <property type="entry name" value="POLIIIAc"/>
    <property type="match status" value="1"/>
</dbReference>
<dbReference type="SUPFAM" id="SSF89550">
    <property type="entry name" value="PHP domain-like"/>
    <property type="match status" value="1"/>
</dbReference>
<proteinExistence type="inferred from homology"/>
<feature type="chain" id="PRO_0000318624" description="Probable phosphatase Cthe_0111">
    <location>
        <begin position="1"/>
        <end position="241"/>
    </location>
</feature>
<feature type="binding site" evidence="1">
    <location>
        <position position="8"/>
    </location>
    <ligand>
        <name>Zn(2+)</name>
        <dbReference type="ChEBI" id="CHEBI:29105"/>
        <label>1</label>
    </ligand>
</feature>
<feature type="binding site" evidence="1">
    <location>
        <position position="10"/>
    </location>
    <ligand>
        <name>Zn(2+)</name>
        <dbReference type="ChEBI" id="CHEBI:29105"/>
        <label>1</label>
    </ligand>
</feature>
<feature type="binding site" evidence="1">
    <location>
        <position position="16"/>
    </location>
    <ligand>
        <name>Zn(2+)</name>
        <dbReference type="ChEBI" id="CHEBI:29105"/>
        <label>2</label>
    </ligand>
</feature>
<feature type="binding site" evidence="1">
    <location>
        <position position="41"/>
    </location>
    <ligand>
        <name>Zn(2+)</name>
        <dbReference type="ChEBI" id="CHEBI:29105"/>
        <label>2</label>
    </ligand>
</feature>
<feature type="binding site" evidence="1">
    <location>
        <position position="74"/>
    </location>
    <ligand>
        <name>Zn(2+)</name>
        <dbReference type="ChEBI" id="CHEBI:29105"/>
        <label>1</label>
    </ligand>
</feature>
<feature type="binding site" evidence="1">
    <location>
        <position position="74"/>
    </location>
    <ligand>
        <name>Zn(2+)</name>
        <dbReference type="ChEBI" id="CHEBI:29105"/>
        <label>3</label>
    </ligand>
</feature>
<feature type="binding site" evidence="1">
    <location>
        <position position="102"/>
    </location>
    <ligand>
        <name>Zn(2+)</name>
        <dbReference type="ChEBI" id="CHEBI:29105"/>
        <label>3</label>
    </ligand>
</feature>
<feature type="binding site" evidence="1">
    <location>
        <position position="132"/>
    </location>
    <ligand>
        <name>Zn(2+)</name>
        <dbReference type="ChEBI" id="CHEBI:29105"/>
        <label>3</label>
    </ligand>
</feature>
<feature type="binding site" evidence="1">
    <location>
        <position position="192"/>
    </location>
    <ligand>
        <name>Zn(2+)</name>
        <dbReference type="ChEBI" id="CHEBI:29105"/>
        <label>1</label>
    </ligand>
</feature>
<feature type="binding site" evidence="1">
    <location>
        <position position="194"/>
    </location>
    <ligand>
        <name>Zn(2+)</name>
        <dbReference type="ChEBI" id="CHEBI:29105"/>
        <label>2</label>
    </ligand>
</feature>
<gene>
    <name type="ordered locus">Cthe_0111</name>
</gene>
<name>Y111_ACET2</name>
<reference key="1">
    <citation type="submission" date="2007-02" db="EMBL/GenBank/DDBJ databases">
        <title>Complete sequence of Clostridium thermocellum ATCC 27405.</title>
        <authorList>
            <consortium name="US DOE Joint Genome Institute"/>
            <person name="Copeland A."/>
            <person name="Lucas S."/>
            <person name="Lapidus A."/>
            <person name="Barry K."/>
            <person name="Detter J.C."/>
            <person name="Glavina del Rio T."/>
            <person name="Hammon N."/>
            <person name="Israni S."/>
            <person name="Dalin E."/>
            <person name="Tice H."/>
            <person name="Pitluck S."/>
            <person name="Chertkov O."/>
            <person name="Brettin T."/>
            <person name="Bruce D."/>
            <person name="Han C."/>
            <person name="Tapia R."/>
            <person name="Gilna P."/>
            <person name="Schmutz J."/>
            <person name="Larimer F."/>
            <person name="Land M."/>
            <person name="Hauser L."/>
            <person name="Kyrpides N."/>
            <person name="Mikhailova N."/>
            <person name="Wu J.H.D."/>
            <person name="Newcomb M."/>
            <person name="Richardson P."/>
        </authorList>
    </citation>
    <scope>NUCLEOTIDE SEQUENCE [LARGE SCALE GENOMIC DNA]</scope>
    <source>
        <strain>ATCC 27405 / DSM 1237 / JCM 9322 / NBRC 103400 / NCIMB 10682 / NRRL B-4536 / VPI 7372</strain>
    </source>
</reference>
<protein>
    <recommendedName>
        <fullName evidence="1">Probable phosphatase Cthe_0111</fullName>
        <ecNumber evidence="1">3.1.3.-</ecNumber>
    </recommendedName>
</protein>
<sequence length="241" mass="27463">MKFVVDTHTHTIASGHAYSTVQEMAKEASANGIEMFAITDHGPAMKGAPYLYHFGNLRVIPEVLYGVRILKGVEANIIDYSGGLDMPEEYLRRLDFVLASFHDICIEPKTLEEHTEAVINVLKNPYVDAIAHPGNPQFPLDIEKVVRAAKENGKFIELNNHSFVTRKGSEENCKEFARECKKQGVRIVCGSDSHISFEVGRFDRVYKLLEEVDMPCELVMNTSVEKFDEYIKRKKERIRRK</sequence>
<accession>A3DBM3</accession>
<organism>
    <name type="scientific">Acetivibrio thermocellus (strain ATCC 27405 / DSM 1237 / JCM 9322 / NBRC 103400 / NCIMB 10682 / NRRL B-4536 / VPI 7372)</name>
    <name type="common">Clostridium thermocellum</name>
    <dbReference type="NCBI Taxonomy" id="203119"/>
    <lineage>
        <taxon>Bacteria</taxon>
        <taxon>Bacillati</taxon>
        <taxon>Bacillota</taxon>
        <taxon>Clostridia</taxon>
        <taxon>Eubacteriales</taxon>
        <taxon>Oscillospiraceae</taxon>
        <taxon>Acetivibrio</taxon>
    </lineage>
</organism>
<evidence type="ECO:0000255" key="1">
    <source>
        <dbReference type="HAMAP-Rule" id="MF_01561"/>
    </source>
</evidence>
<comment type="cofactor">
    <cofactor evidence="1">
        <name>Zn(2+)</name>
        <dbReference type="ChEBI" id="CHEBI:29105"/>
    </cofactor>
    <text evidence="1">Binds 3 Zn(2+) ions per subunit.</text>
</comment>
<comment type="similarity">
    <text evidence="1">Belongs to the PHP family.</text>
</comment>